<sequence length="457" mass="50830">MGLIVSIFNIGCAIGGIVLSKVGDIYGRRIGLITVTAIYVVGILIQITSINKWYQYFIGRIISGIGVGGIAVLSPMLISEVAPKHIRGTLVQLYQLMGTMGIFLGYCTNYGTKNYHNATQWRVGLGLCFAWATFMVSGMMFVPESPRYLIEVGKDEEAKHSLSKSNKVSVDDPALLAEYDTIKAGIEIEKLAGNASWSELLSTKTKVFQRVLMGVIIQSLQQLTGDNYFFYYGTTIFKSVGLKDSFQTSIIIGVVNFFSSFIAVYTIERFGRRTCLLWGAASMLCCFAVFASVGVTKLWPQGSSHQDITSQGAGNCMIVFTMFFIFSFATTWAGGCFVIVSETFPLRAKSRGMAIATAANWMWGFLISFFTPFITGAINFYYGYVFLGCLVFAYFYVFFFVPETKGLTLEEVNTMWLEGVPAWKSASWVPPERRTADYDADAIDHDNRPIYKRFFSS</sequence>
<keyword id="KW-0325">Glycoprotein</keyword>
<keyword id="KW-0472">Membrane</keyword>
<keyword id="KW-0677">Repeat</keyword>
<keyword id="KW-0762">Sugar transport</keyword>
<keyword id="KW-0812">Transmembrane</keyword>
<keyword id="KW-1133">Transmembrane helix</keyword>
<keyword id="KW-0813">Transport</keyword>
<proteinExistence type="uncertain"/>
<protein>
    <recommendedName>
        <fullName>Putative hexose transporter 12</fullName>
    </recommendedName>
</protein>
<evidence type="ECO:0000255" key="1"/>
<evidence type="ECO:0000305" key="2"/>
<evidence type="ECO:0000305" key="3">
    <source>
    </source>
</evidence>
<dbReference type="EMBL" id="Z46921">
    <property type="protein sequence ID" value="CAA87022.1"/>
    <property type="molecule type" value="Genomic_DNA"/>
</dbReference>
<dbReference type="PIR" id="S50357">
    <property type="entry name" value="S50357"/>
</dbReference>
<dbReference type="SMR" id="P40441"/>
<dbReference type="DIP" id="DIP-7421N"/>
<dbReference type="IntAct" id="P40441">
    <property type="interactions" value="2"/>
</dbReference>
<dbReference type="MINT" id="P40441"/>
<dbReference type="GlyCosmos" id="P40441">
    <property type="glycosylation" value="1 site, No reported glycans"/>
</dbReference>
<dbReference type="AGR" id="SGD:S000001432"/>
<dbReference type="SGD" id="S000001432">
    <property type="gene designation" value="HXT12"/>
</dbReference>
<dbReference type="GO" id="GO:0016020">
    <property type="term" value="C:membrane"/>
    <property type="evidence" value="ECO:0007669"/>
    <property type="project" value="UniProtKB-SubCell"/>
</dbReference>
<dbReference type="GO" id="GO:0055056">
    <property type="term" value="F:D-glucose transmembrane transporter activity"/>
    <property type="evidence" value="ECO:0007669"/>
    <property type="project" value="UniProtKB-ARBA"/>
</dbReference>
<dbReference type="CDD" id="cd17356">
    <property type="entry name" value="MFS_HXT"/>
    <property type="match status" value="1"/>
</dbReference>
<dbReference type="FunFam" id="1.20.1250.20:FF:000044">
    <property type="entry name" value="Hexose transporter Hxt3p"/>
    <property type="match status" value="1"/>
</dbReference>
<dbReference type="Gene3D" id="1.20.1250.20">
    <property type="entry name" value="MFS general substrate transporter like domains"/>
    <property type="match status" value="1"/>
</dbReference>
<dbReference type="InterPro" id="IPR020846">
    <property type="entry name" value="MFS_dom"/>
</dbReference>
<dbReference type="InterPro" id="IPR005828">
    <property type="entry name" value="MFS_sugar_transport-like"/>
</dbReference>
<dbReference type="InterPro" id="IPR050360">
    <property type="entry name" value="MFS_Sugar_Transporters"/>
</dbReference>
<dbReference type="InterPro" id="IPR036259">
    <property type="entry name" value="MFS_trans_sf"/>
</dbReference>
<dbReference type="InterPro" id="IPR003663">
    <property type="entry name" value="Sugar/inositol_transpt"/>
</dbReference>
<dbReference type="InterPro" id="IPR005829">
    <property type="entry name" value="Sugar_transporter_CS"/>
</dbReference>
<dbReference type="NCBIfam" id="TIGR00879">
    <property type="entry name" value="SP"/>
    <property type="match status" value="1"/>
</dbReference>
<dbReference type="PANTHER" id="PTHR48022:SF75">
    <property type="entry name" value="GALACTOSE TRANSPORTER-RELATED"/>
    <property type="match status" value="1"/>
</dbReference>
<dbReference type="PANTHER" id="PTHR48022">
    <property type="entry name" value="PLASTIDIC GLUCOSE TRANSPORTER 4"/>
    <property type="match status" value="1"/>
</dbReference>
<dbReference type="Pfam" id="PF00083">
    <property type="entry name" value="Sugar_tr"/>
    <property type="match status" value="1"/>
</dbReference>
<dbReference type="PRINTS" id="PR00171">
    <property type="entry name" value="SUGRTRNSPORT"/>
</dbReference>
<dbReference type="SUPFAM" id="SSF103473">
    <property type="entry name" value="MFS general substrate transporter"/>
    <property type="match status" value="1"/>
</dbReference>
<dbReference type="PROSITE" id="PS50850">
    <property type="entry name" value="MFS"/>
    <property type="match status" value="1"/>
</dbReference>
<dbReference type="PROSITE" id="PS00216">
    <property type="entry name" value="SUGAR_TRANSPORT_1"/>
    <property type="match status" value="1"/>
</dbReference>
<dbReference type="PROSITE" id="PS00217">
    <property type="entry name" value="SUGAR_TRANSPORT_2"/>
    <property type="match status" value="1"/>
</dbReference>
<reference key="1">
    <citation type="journal article" date="1997" name="Nature">
        <title>The nucleotide sequence of Saccharomyces cerevisiae chromosome IX.</title>
        <authorList>
            <person name="Churcher C.M."/>
            <person name="Bowman S."/>
            <person name="Badcock K."/>
            <person name="Bankier A.T."/>
            <person name="Brown D."/>
            <person name="Chillingworth T."/>
            <person name="Connor R."/>
            <person name="Devlin K."/>
            <person name="Gentles S."/>
            <person name="Hamlin N."/>
            <person name="Harris D.E."/>
            <person name="Horsnell T."/>
            <person name="Hunt S."/>
            <person name="Jagels K."/>
            <person name="Jones M."/>
            <person name="Lye G."/>
            <person name="Moule S."/>
            <person name="Odell C."/>
            <person name="Pearson D."/>
            <person name="Rajandream M.A."/>
            <person name="Rice P."/>
            <person name="Rowley N."/>
            <person name="Skelton J."/>
            <person name="Smith V."/>
            <person name="Walsh S.V."/>
            <person name="Whitehead S."/>
            <person name="Barrell B.G."/>
        </authorList>
    </citation>
    <scope>NUCLEOTIDE SEQUENCE [LARGE SCALE GENOMIC DNA]</scope>
    <source>
        <strain>ATCC 204508 / S288c</strain>
    </source>
</reference>
<reference key="2">
    <citation type="journal article" date="2014" name="G3 (Bethesda)">
        <title>The reference genome sequence of Saccharomyces cerevisiae: Then and now.</title>
        <authorList>
            <person name="Engel S.R."/>
            <person name="Dietrich F.S."/>
            <person name="Fisk D.G."/>
            <person name="Binkley G."/>
            <person name="Balakrishnan R."/>
            <person name="Costanzo M.C."/>
            <person name="Dwight S.S."/>
            <person name="Hitz B.C."/>
            <person name="Karra K."/>
            <person name="Nash R.S."/>
            <person name="Weng S."/>
            <person name="Wong E.D."/>
            <person name="Lloyd P."/>
            <person name="Skrzypek M.S."/>
            <person name="Miyasato S.R."/>
            <person name="Simison M."/>
            <person name="Cherry J.M."/>
        </authorList>
    </citation>
    <scope>GENOME REANNOTATION</scope>
    <source>
        <strain>ATCC 204508 / S288c</strain>
    </source>
</reference>
<gene>
    <name type="primary">HXT12</name>
    <name type="ordered locus">YIL170W</name>
    <name type="ORF">YI9402.06B</name>
</gene>
<feature type="chain" id="PRO_0000050408" description="Putative hexose transporter 12">
    <location>
        <begin position="1"/>
        <end position="457"/>
    </location>
</feature>
<feature type="topological domain" description="Cytoplasmic" evidence="1">
    <location>
        <begin position="1"/>
        <end position="2"/>
    </location>
</feature>
<feature type="transmembrane region" description="Helical; Name=1" evidence="1">
    <location>
        <begin position="3"/>
        <end position="23"/>
    </location>
</feature>
<feature type="topological domain" description="Extracellular" evidence="1">
    <location>
        <begin position="24"/>
        <end position="29"/>
    </location>
</feature>
<feature type="transmembrane region" description="Helical; Name=2" evidence="1">
    <location>
        <begin position="30"/>
        <end position="50"/>
    </location>
</feature>
<feature type="topological domain" description="Cytoplasmic" evidence="1">
    <location>
        <begin position="51"/>
        <end position="60"/>
    </location>
</feature>
<feature type="transmembrane region" description="Helical; Name=3" evidence="1">
    <location>
        <begin position="61"/>
        <end position="81"/>
    </location>
</feature>
<feature type="topological domain" description="Extracellular" evidence="1">
    <location>
        <begin position="82"/>
        <end position="87"/>
    </location>
</feature>
<feature type="transmembrane region" description="Helical; Name=4" evidence="1">
    <location>
        <begin position="88"/>
        <end position="108"/>
    </location>
</feature>
<feature type="topological domain" description="Cytoplasmic" evidence="1">
    <location>
        <begin position="109"/>
        <end position="122"/>
    </location>
</feature>
<feature type="transmembrane region" description="Helical; Name=5" evidence="1">
    <location>
        <begin position="123"/>
        <end position="143"/>
    </location>
</feature>
<feature type="topological domain" description="Extracellular" evidence="1">
    <location>
        <begin position="144"/>
        <end position="247"/>
    </location>
</feature>
<feature type="transmembrane region" description="Helical; Name=6" evidence="1">
    <location>
        <begin position="248"/>
        <end position="268"/>
    </location>
</feature>
<feature type="topological domain" description="Cytoplasmic" evidence="1">
    <location>
        <begin position="269"/>
        <end position="274"/>
    </location>
</feature>
<feature type="transmembrane region" description="Helical; Name=7" evidence="1">
    <location>
        <begin position="275"/>
        <end position="295"/>
    </location>
</feature>
<feature type="topological domain" description="Extracellular" evidence="1">
    <location>
        <begin position="296"/>
        <end position="319"/>
    </location>
</feature>
<feature type="transmembrane region" description="Helical; Name=8" evidence="1">
    <location>
        <begin position="320"/>
        <end position="340"/>
    </location>
</feature>
<feature type="topological domain" description="Cytoplasmic" evidence="1">
    <location>
        <begin position="341"/>
        <end position="353"/>
    </location>
</feature>
<feature type="transmembrane region" description="Helical; Name=9" evidence="1">
    <location>
        <begin position="354"/>
        <end position="374"/>
    </location>
</feature>
<feature type="topological domain" description="Extracellular" evidence="1">
    <location>
        <begin position="375"/>
        <end position="379"/>
    </location>
</feature>
<feature type="transmembrane region" description="Helical; Name=10" evidence="1">
    <location>
        <begin position="380"/>
        <end position="400"/>
    </location>
</feature>
<feature type="topological domain" description="Cytoplasmic" evidence="1">
    <location>
        <begin position="401"/>
        <end position="457"/>
    </location>
</feature>
<feature type="glycosylation site" description="N-linked (GlcNAc...) asparagine" evidence="1">
    <location>
        <position position="194"/>
    </location>
</feature>
<comment type="function">
    <text>Probable glucose transporter.</text>
</comment>
<comment type="subcellular location">
    <subcellularLocation>
        <location evidence="2">Membrane</location>
        <topology evidence="2">Multi-pass membrane protein</topology>
    </subcellularLocation>
</comment>
<comment type="similarity">
    <text evidence="2">Belongs to the major facilitator superfamily. Sugar transporter (TC 2.A.1.1) family.</text>
</comment>
<comment type="caution">
    <text evidence="3">Could be the product of a pseudogene unlikely to encode a functional protein. YIL171W and YIL170W represent the N- and C-terminal of a putative transporter. Because of that it is not part of the S.cerevisiae S288c complete/reference proteome set.</text>
</comment>
<accession>P40441</accession>
<organism>
    <name type="scientific">Saccharomyces cerevisiae (strain ATCC 204508 / S288c)</name>
    <name type="common">Baker's yeast</name>
    <dbReference type="NCBI Taxonomy" id="559292"/>
    <lineage>
        <taxon>Eukaryota</taxon>
        <taxon>Fungi</taxon>
        <taxon>Dikarya</taxon>
        <taxon>Ascomycota</taxon>
        <taxon>Saccharomycotina</taxon>
        <taxon>Saccharomycetes</taxon>
        <taxon>Saccharomycetales</taxon>
        <taxon>Saccharomycetaceae</taxon>
        <taxon>Saccharomyces</taxon>
    </lineage>
</organism>
<name>HXT12_YEAST</name>